<feature type="signal peptide" evidence="2">
    <location>
        <begin position="1"/>
        <end position="18"/>
    </location>
</feature>
<feature type="chain" id="PRO_0000411947" description="Pheromone-processing carboxypeptidase kex1">
    <location>
        <begin position="19"/>
        <end position="624"/>
    </location>
</feature>
<feature type="topological domain" description="Lumenal" evidence="2">
    <location>
        <begin position="19"/>
        <end position="504"/>
    </location>
</feature>
<feature type="transmembrane region" description="Helical" evidence="2">
    <location>
        <begin position="505"/>
        <end position="525"/>
    </location>
</feature>
<feature type="topological domain" description="Cytoplasmic" evidence="2">
    <location>
        <begin position="526"/>
        <end position="624"/>
    </location>
</feature>
<feature type="region of interest" description="Disordered" evidence="3">
    <location>
        <begin position="461"/>
        <end position="491"/>
    </location>
</feature>
<feature type="region of interest" description="Disordered" evidence="3">
    <location>
        <begin position="533"/>
        <end position="624"/>
    </location>
</feature>
<feature type="compositionally biased region" description="Polar residues" evidence="3">
    <location>
        <begin position="472"/>
        <end position="486"/>
    </location>
</feature>
<feature type="compositionally biased region" description="Polar residues" evidence="3">
    <location>
        <begin position="565"/>
        <end position="575"/>
    </location>
</feature>
<feature type="compositionally biased region" description="Acidic residues" evidence="3">
    <location>
        <begin position="606"/>
        <end position="615"/>
    </location>
</feature>
<feature type="active site" evidence="1">
    <location>
        <position position="170"/>
    </location>
</feature>
<feature type="active site" evidence="1">
    <location>
        <position position="370"/>
    </location>
</feature>
<feature type="active site" evidence="1">
    <location>
        <position position="432"/>
    </location>
</feature>
<feature type="glycosylation site" description="N-linked (GlcNAc...) asparagine" evidence="2">
    <location>
        <position position="106"/>
    </location>
</feature>
<feature type="glycosylation site" description="N-linked (GlcNAc...) asparagine" evidence="2">
    <location>
        <position position="421"/>
    </location>
</feature>
<feature type="glycosylation site" description="N-linked (GlcNAc...) asparagine" evidence="2">
    <location>
        <position position="429"/>
    </location>
</feature>
<feature type="glycosylation site" description="N-linked (GlcNAc...) asparagine" evidence="2">
    <location>
        <position position="478"/>
    </location>
</feature>
<name>KEX1_TALSN</name>
<comment type="function">
    <text evidence="1">Protease with a carboxypeptidase B-like function involved in the C-terminal processing of the lysine and arginine residues from protein precursors. Promotes cell fusion and is involved in the programmed cell death (By similarity).</text>
</comment>
<comment type="catalytic activity">
    <reaction>
        <text>Preferential release of a C-terminal arginine or lysine residue.</text>
        <dbReference type="EC" id="3.4.16.6"/>
    </reaction>
</comment>
<comment type="subcellular location">
    <subcellularLocation>
        <location evidence="1">Golgi apparatus</location>
        <location evidence="1">trans-Golgi network membrane</location>
        <topology evidence="1">Single-pass type I membrane protein</topology>
    </subcellularLocation>
</comment>
<comment type="similarity">
    <text evidence="4">Belongs to the peptidase S10 family.</text>
</comment>
<organism>
    <name type="scientific">Talaromyces stipitatus (strain ATCC 10500 / CBS 375.48 / QM 6759 / NRRL 1006)</name>
    <name type="common">Penicillium stipitatum</name>
    <dbReference type="NCBI Taxonomy" id="441959"/>
    <lineage>
        <taxon>Eukaryota</taxon>
        <taxon>Fungi</taxon>
        <taxon>Dikarya</taxon>
        <taxon>Ascomycota</taxon>
        <taxon>Pezizomycotina</taxon>
        <taxon>Eurotiomycetes</taxon>
        <taxon>Eurotiomycetidae</taxon>
        <taxon>Eurotiales</taxon>
        <taxon>Trichocomaceae</taxon>
        <taxon>Talaromyces</taxon>
        <taxon>Talaromyces sect. Talaromyces</taxon>
    </lineage>
</organism>
<dbReference type="EC" id="3.4.16.6"/>
<dbReference type="EMBL" id="EQ962654">
    <property type="protein sequence ID" value="EED20239.1"/>
    <property type="molecule type" value="Genomic_DNA"/>
</dbReference>
<dbReference type="RefSeq" id="XP_002480673.1">
    <property type="nucleotide sequence ID" value="XM_002480628.1"/>
</dbReference>
<dbReference type="SMR" id="B8M719"/>
<dbReference type="FunCoup" id="B8M719">
    <property type="interactions" value="119"/>
</dbReference>
<dbReference type="STRING" id="441959.B8M719"/>
<dbReference type="ESTHER" id="talsn-kex1">
    <property type="family name" value="Carboxypeptidase_S10"/>
</dbReference>
<dbReference type="MEROPS" id="S10.007"/>
<dbReference type="GlyCosmos" id="B8M719">
    <property type="glycosylation" value="4 sites, No reported glycans"/>
</dbReference>
<dbReference type="GeneID" id="8104317"/>
<dbReference type="VEuPathDB" id="FungiDB:TSTA_034750"/>
<dbReference type="eggNOG" id="KOG1282">
    <property type="taxonomic scope" value="Eukaryota"/>
</dbReference>
<dbReference type="InParanoid" id="B8M719"/>
<dbReference type="OrthoDB" id="443318at2759"/>
<dbReference type="PhylomeDB" id="B8M719"/>
<dbReference type="Proteomes" id="UP000001745">
    <property type="component" value="Unassembled WGS sequence"/>
</dbReference>
<dbReference type="GO" id="GO:0016020">
    <property type="term" value="C:membrane"/>
    <property type="evidence" value="ECO:0007669"/>
    <property type="project" value="UniProtKB-KW"/>
</dbReference>
<dbReference type="GO" id="GO:0005802">
    <property type="term" value="C:trans-Golgi network"/>
    <property type="evidence" value="ECO:0007669"/>
    <property type="project" value="TreeGrafter"/>
</dbReference>
<dbReference type="GO" id="GO:0004185">
    <property type="term" value="F:serine-type carboxypeptidase activity"/>
    <property type="evidence" value="ECO:0007669"/>
    <property type="project" value="UniProtKB-EC"/>
</dbReference>
<dbReference type="GO" id="GO:0006915">
    <property type="term" value="P:apoptotic process"/>
    <property type="evidence" value="ECO:0007669"/>
    <property type="project" value="UniProtKB-KW"/>
</dbReference>
<dbReference type="GO" id="GO:0006508">
    <property type="term" value="P:proteolysis"/>
    <property type="evidence" value="ECO:0007669"/>
    <property type="project" value="UniProtKB-KW"/>
</dbReference>
<dbReference type="FunFam" id="3.40.50.1820:FF:000121">
    <property type="entry name" value="Carboxypeptidase D"/>
    <property type="match status" value="1"/>
</dbReference>
<dbReference type="Gene3D" id="3.40.50.1820">
    <property type="entry name" value="alpha/beta hydrolase"/>
    <property type="match status" value="1"/>
</dbReference>
<dbReference type="InterPro" id="IPR029058">
    <property type="entry name" value="AB_hydrolase_fold"/>
</dbReference>
<dbReference type="InterPro" id="IPR001563">
    <property type="entry name" value="Peptidase_S10"/>
</dbReference>
<dbReference type="PANTHER" id="PTHR11802:SF190">
    <property type="entry name" value="PHEROMONE-PROCESSING CARBOXYPEPTIDASE KEX1"/>
    <property type="match status" value="1"/>
</dbReference>
<dbReference type="PANTHER" id="PTHR11802">
    <property type="entry name" value="SERINE PROTEASE FAMILY S10 SERINE CARBOXYPEPTIDASE"/>
    <property type="match status" value="1"/>
</dbReference>
<dbReference type="Pfam" id="PF00450">
    <property type="entry name" value="Peptidase_S10"/>
    <property type="match status" value="1"/>
</dbReference>
<dbReference type="PRINTS" id="PR00724">
    <property type="entry name" value="CRBOXYPTASEC"/>
</dbReference>
<dbReference type="SUPFAM" id="SSF53474">
    <property type="entry name" value="alpha/beta-Hydrolases"/>
    <property type="match status" value="1"/>
</dbReference>
<evidence type="ECO:0000250" key="1"/>
<evidence type="ECO:0000255" key="2"/>
<evidence type="ECO:0000256" key="3">
    <source>
        <dbReference type="SAM" id="MobiDB-lite"/>
    </source>
</evidence>
<evidence type="ECO:0000305" key="4"/>
<gene>
    <name type="primary">kex1</name>
    <name type="ORF">TSTA_034750</name>
</gene>
<accession>B8M719</accession>
<protein>
    <recommendedName>
        <fullName>Pheromone-processing carboxypeptidase kex1</fullName>
        <ecNumber>3.4.16.6</ecNumber>
    </recommendedName>
    <alternativeName>
        <fullName>Carboxypeptidase D</fullName>
    </alternativeName>
</protein>
<keyword id="KW-0053">Apoptosis</keyword>
<keyword id="KW-0121">Carboxypeptidase</keyword>
<keyword id="KW-0325">Glycoprotein</keyword>
<keyword id="KW-0333">Golgi apparatus</keyword>
<keyword id="KW-0378">Hydrolase</keyword>
<keyword id="KW-0472">Membrane</keyword>
<keyword id="KW-0645">Protease</keyword>
<keyword id="KW-1185">Reference proteome</keyword>
<keyword id="KW-0732">Signal</keyword>
<keyword id="KW-0812">Transmembrane</keyword>
<keyword id="KW-1133">Transmembrane helix</keyword>
<reference key="1">
    <citation type="journal article" date="2015" name="Genome Announc.">
        <title>Genome sequence of the AIDS-associated pathogen Penicillium marneffei (ATCC18224) and its near taxonomic relative Talaromyces stipitatus (ATCC10500).</title>
        <authorList>
            <person name="Nierman W.C."/>
            <person name="Fedorova-Abrams N.D."/>
            <person name="Andrianopoulos A."/>
        </authorList>
    </citation>
    <scope>NUCLEOTIDE SEQUENCE [LARGE SCALE GENOMIC DNA]</scope>
    <source>
        <strain>ATCC 10500 / CBS 375.48 / QM 6759 / NRRL 1006</strain>
    </source>
</reference>
<sequence>MLGKALLLLLSSPICALAQSAADYYVKSIPGQPDGPLLKMHAGHIEVDAQTNGHLFFWHFQNRHIANRQRTIIWLNGGPGCSSMDGALMEIGPYRVKDDHTLVYNNGSWDEFANLLFIDQPVGTGFSYVNTNSFLHDLDHVSSHMVTFLDKWFAMFPEYESDDLYIAGESWAGQYIPHIARAIVARNKNIDSKQQPWVLKGLLIGNGWISPLDQYPATMQYAYAEGLVKEGSSTATSLDAMNDACAQKLADPGSQNMIRIGQCESVLDSLMRLTRTSEEECVNMYDIRLKDASCGRTWPPDLDPMTRYLQRTEVRSALNLDREQTNSWTECNDQVGFNLRLENPGVPAVHLLPDLIESGVKILLFSGDRDLICNHLGTEQLIHNMKWSGGTGFETKPGVWAPRRDWTFEGDAAGYYQQARNLTYVLFYNASHMVPYDWPRRTRDMVDRFINVDIANIGGTPADSRLDGEKLPQTSVGNTTSSTSESDQVDQEKLKDAEWKAYAKSGEAALIVVIIGVSVWGFFIWRARQRASRGSSPSKKGYRSVYPGGSNNTSSSDGAGLLSRFRNNTNNNASSDLEARDFDEAELDSLSPGLQNARERDHYVIGEEDEEDEDIGNGAKSSLH</sequence>
<proteinExistence type="inferred from homology"/>